<keyword id="KW-0963">Cytoplasm</keyword>
<keyword id="KW-0489">Methyltransferase</keyword>
<keyword id="KW-1185">Reference proteome</keyword>
<keyword id="KW-0949">S-adenosyl-L-methionine</keyword>
<keyword id="KW-0808">Transferase</keyword>
<keyword id="KW-0819">tRNA processing</keyword>
<sequence length="254" mass="28794">MKFFVLTIFPQFFEGFINTGIVSRAVKKGIVDIKSVDLRDFTEDKHRTVDDVVYGGGPGMLLKPEPIFKAYDSITEKGHKPYVLITEPWGRKFDQKFAEELSKKEEIMIICGRYEGVDERVKSIVDEEVSIGDFILSGGEPAALVIMDAVIRLIPGVVGDSESLNADSFSNDGLLGYPNYTRPAEYRGMKVPEVLRSGNHKLIKLWRRWKQIEKTAVRKPELLKKADLSDSDKKIIDAIKKGLSFEDFLKKYKV</sequence>
<reference key="1">
    <citation type="journal article" date="2009" name="J. Bacteriol.">
        <title>Complete and draft genome sequences of six members of the Aquificales.</title>
        <authorList>
            <person name="Reysenbach A.-L."/>
            <person name="Hamamura N."/>
            <person name="Podar M."/>
            <person name="Griffiths E."/>
            <person name="Ferreira S."/>
            <person name="Hochstein R."/>
            <person name="Heidelberg J."/>
            <person name="Johnson J."/>
            <person name="Mead D."/>
            <person name="Pohorille A."/>
            <person name="Sarmiento M."/>
            <person name="Schweighofer K."/>
            <person name="Seshadri R."/>
            <person name="Voytek M.A."/>
        </authorList>
    </citation>
    <scope>NUCLEOTIDE SEQUENCE [LARGE SCALE GENOMIC DNA]</scope>
    <source>
        <strain>DSM 14350 / EX-H1</strain>
    </source>
</reference>
<comment type="function">
    <text evidence="1">Specifically methylates guanosine-37 in various tRNAs.</text>
</comment>
<comment type="catalytic activity">
    <reaction evidence="1">
        <text>guanosine(37) in tRNA + S-adenosyl-L-methionine = N(1)-methylguanosine(37) in tRNA + S-adenosyl-L-homocysteine + H(+)</text>
        <dbReference type="Rhea" id="RHEA:36899"/>
        <dbReference type="Rhea" id="RHEA-COMP:10145"/>
        <dbReference type="Rhea" id="RHEA-COMP:10147"/>
        <dbReference type="ChEBI" id="CHEBI:15378"/>
        <dbReference type="ChEBI" id="CHEBI:57856"/>
        <dbReference type="ChEBI" id="CHEBI:59789"/>
        <dbReference type="ChEBI" id="CHEBI:73542"/>
        <dbReference type="ChEBI" id="CHEBI:74269"/>
        <dbReference type="EC" id="2.1.1.228"/>
    </reaction>
</comment>
<comment type="subunit">
    <text evidence="1">Homodimer.</text>
</comment>
<comment type="subcellular location">
    <subcellularLocation>
        <location evidence="1">Cytoplasm</location>
    </subcellularLocation>
</comment>
<comment type="similarity">
    <text evidence="1">Belongs to the RNA methyltransferase TrmD family.</text>
</comment>
<protein>
    <recommendedName>
        <fullName evidence="1">tRNA (guanine-N(1)-)-methyltransferase</fullName>
        <ecNumber evidence="1">2.1.1.228</ecNumber>
    </recommendedName>
    <alternativeName>
        <fullName evidence="1">M1G-methyltransferase</fullName>
    </alternativeName>
    <alternativeName>
        <fullName evidence="1">tRNA [GM37] methyltransferase</fullName>
    </alternativeName>
</protein>
<accession>C0QQJ9</accession>
<feature type="chain" id="PRO_1000198579" description="tRNA (guanine-N(1)-)-methyltransferase">
    <location>
        <begin position="1"/>
        <end position="254"/>
    </location>
</feature>
<feature type="binding site" evidence="1">
    <location>
        <position position="112"/>
    </location>
    <ligand>
        <name>S-adenosyl-L-methionine</name>
        <dbReference type="ChEBI" id="CHEBI:59789"/>
    </ligand>
</feature>
<feature type="binding site" evidence="1">
    <location>
        <begin position="131"/>
        <end position="136"/>
    </location>
    <ligand>
        <name>S-adenosyl-L-methionine</name>
        <dbReference type="ChEBI" id="CHEBI:59789"/>
    </ligand>
</feature>
<evidence type="ECO:0000255" key="1">
    <source>
        <dbReference type="HAMAP-Rule" id="MF_00605"/>
    </source>
</evidence>
<gene>
    <name evidence="1" type="primary">trmD</name>
    <name type="ordered locus">PERMA_1163</name>
</gene>
<proteinExistence type="inferred from homology"/>
<dbReference type="EC" id="2.1.1.228" evidence="1"/>
<dbReference type="EMBL" id="CP001230">
    <property type="protein sequence ID" value="ACO04739.1"/>
    <property type="molecule type" value="Genomic_DNA"/>
</dbReference>
<dbReference type="RefSeq" id="WP_015898843.1">
    <property type="nucleotide sequence ID" value="NC_012440.1"/>
</dbReference>
<dbReference type="SMR" id="C0QQJ9"/>
<dbReference type="STRING" id="123214.PERMA_1163"/>
<dbReference type="PaxDb" id="123214-PERMA_1163"/>
<dbReference type="KEGG" id="pmx:PERMA_1163"/>
<dbReference type="eggNOG" id="COG0336">
    <property type="taxonomic scope" value="Bacteria"/>
</dbReference>
<dbReference type="HOGENOM" id="CLU_047363_0_1_0"/>
<dbReference type="OrthoDB" id="9807416at2"/>
<dbReference type="Proteomes" id="UP000001366">
    <property type="component" value="Chromosome"/>
</dbReference>
<dbReference type="GO" id="GO:0005829">
    <property type="term" value="C:cytosol"/>
    <property type="evidence" value="ECO:0007669"/>
    <property type="project" value="TreeGrafter"/>
</dbReference>
<dbReference type="GO" id="GO:0052906">
    <property type="term" value="F:tRNA (guanine(37)-N1)-methyltransferase activity"/>
    <property type="evidence" value="ECO:0007669"/>
    <property type="project" value="UniProtKB-UniRule"/>
</dbReference>
<dbReference type="GO" id="GO:0002939">
    <property type="term" value="P:tRNA N1-guanine methylation"/>
    <property type="evidence" value="ECO:0007669"/>
    <property type="project" value="TreeGrafter"/>
</dbReference>
<dbReference type="CDD" id="cd18080">
    <property type="entry name" value="TrmD-like"/>
    <property type="match status" value="1"/>
</dbReference>
<dbReference type="FunFam" id="1.10.1270.20:FF:000001">
    <property type="entry name" value="tRNA (guanine-N(1)-)-methyltransferase"/>
    <property type="match status" value="1"/>
</dbReference>
<dbReference type="FunFam" id="3.40.1280.10:FF:000001">
    <property type="entry name" value="tRNA (guanine-N(1)-)-methyltransferase"/>
    <property type="match status" value="1"/>
</dbReference>
<dbReference type="Gene3D" id="3.40.1280.10">
    <property type="match status" value="1"/>
</dbReference>
<dbReference type="Gene3D" id="1.10.1270.20">
    <property type="entry name" value="tRNA(m1g37)methyltransferase, domain 2"/>
    <property type="match status" value="1"/>
</dbReference>
<dbReference type="HAMAP" id="MF_00605">
    <property type="entry name" value="TrmD"/>
    <property type="match status" value="1"/>
</dbReference>
<dbReference type="InterPro" id="IPR029028">
    <property type="entry name" value="Alpha/beta_knot_MTases"/>
</dbReference>
<dbReference type="InterPro" id="IPR023148">
    <property type="entry name" value="tRNA_m1G_MeTrfase_C_sf"/>
</dbReference>
<dbReference type="InterPro" id="IPR002649">
    <property type="entry name" value="tRNA_m1G_MeTrfase_TrmD"/>
</dbReference>
<dbReference type="InterPro" id="IPR029026">
    <property type="entry name" value="tRNA_m1G_MTases_N"/>
</dbReference>
<dbReference type="InterPro" id="IPR016009">
    <property type="entry name" value="tRNA_MeTrfase_TRMD/TRM10"/>
</dbReference>
<dbReference type="NCBIfam" id="NF000648">
    <property type="entry name" value="PRK00026.1"/>
    <property type="match status" value="1"/>
</dbReference>
<dbReference type="NCBIfam" id="TIGR00088">
    <property type="entry name" value="trmD"/>
    <property type="match status" value="1"/>
</dbReference>
<dbReference type="PANTHER" id="PTHR46417">
    <property type="entry name" value="TRNA (GUANINE-N(1)-)-METHYLTRANSFERASE"/>
    <property type="match status" value="1"/>
</dbReference>
<dbReference type="PANTHER" id="PTHR46417:SF1">
    <property type="entry name" value="TRNA (GUANINE-N(1)-)-METHYLTRANSFERASE"/>
    <property type="match status" value="1"/>
</dbReference>
<dbReference type="Pfam" id="PF01746">
    <property type="entry name" value="tRNA_m1G_MT"/>
    <property type="match status" value="1"/>
</dbReference>
<dbReference type="PIRSF" id="PIRSF000386">
    <property type="entry name" value="tRNA_mtase"/>
    <property type="match status" value="1"/>
</dbReference>
<dbReference type="SUPFAM" id="SSF75217">
    <property type="entry name" value="alpha/beta knot"/>
    <property type="match status" value="1"/>
</dbReference>
<name>TRMD_PERMH</name>
<organism>
    <name type="scientific">Persephonella marina (strain DSM 14350 / EX-H1)</name>
    <dbReference type="NCBI Taxonomy" id="123214"/>
    <lineage>
        <taxon>Bacteria</taxon>
        <taxon>Pseudomonadati</taxon>
        <taxon>Aquificota</taxon>
        <taxon>Aquificia</taxon>
        <taxon>Aquificales</taxon>
        <taxon>Hydrogenothermaceae</taxon>
        <taxon>Persephonella</taxon>
    </lineage>
</organism>